<feature type="chain" id="PRO_0000235382" description="Holliday junction branch migration complex subunit RuvB">
    <location>
        <begin position="1"/>
        <end position="348"/>
    </location>
</feature>
<feature type="region of interest" description="Large ATPase domain (RuvB-L)" evidence="1">
    <location>
        <begin position="1"/>
        <end position="183"/>
    </location>
</feature>
<feature type="region of interest" description="Small ATPAse domain (RuvB-S)" evidence="1">
    <location>
        <begin position="184"/>
        <end position="254"/>
    </location>
</feature>
<feature type="region of interest" description="Head domain (RuvB-H)" evidence="1">
    <location>
        <begin position="257"/>
        <end position="348"/>
    </location>
</feature>
<feature type="region of interest" description="Disordered" evidence="2">
    <location>
        <begin position="329"/>
        <end position="348"/>
    </location>
</feature>
<feature type="binding site" evidence="1">
    <location>
        <position position="22"/>
    </location>
    <ligand>
        <name>ATP</name>
        <dbReference type="ChEBI" id="CHEBI:30616"/>
    </ligand>
</feature>
<feature type="binding site" evidence="1">
    <location>
        <position position="23"/>
    </location>
    <ligand>
        <name>ATP</name>
        <dbReference type="ChEBI" id="CHEBI:30616"/>
    </ligand>
</feature>
<feature type="binding site" evidence="1">
    <location>
        <position position="64"/>
    </location>
    <ligand>
        <name>ATP</name>
        <dbReference type="ChEBI" id="CHEBI:30616"/>
    </ligand>
</feature>
<feature type="binding site" evidence="1">
    <location>
        <position position="67"/>
    </location>
    <ligand>
        <name>ATP</name>
        <dbReference type="ChEBI" id="CHEBI:30616"/>
    </ligand>
</feature>
<feature type="binding site" evidence="1">
    <location>
        <position position="68"/>
    </location>
    <ligand>
        <name>ATP</name>
        <dbReference type="ChEBI" id="CHEBI:30616"/>
    </ligand>
</feature>
<feature type="binding site" evidence="1">
    <location>
        <position position="68"/>
    </location>
    <ligand>
        <name>Mg(2+)</name>
        <dbReference type="ChEBI" id="CHEBI:18420"/>
    </ligand>
</feature>
<feature type="binding site" evidence="1">
    <location>
        <position position="69"/>
    </location>
    <ligand>
        <name>ATP</name>
        <dbReference type="ChEBI" id="CHEBI:30616"/>
    </ligand>
</feature>
<feature type="binding site" evidence="1">
    <location>
        <begin position="130"/>
        <end position="132"/>
    </location>
    <ligand>
        <name>ATP</name>
        <dbReference type="ChEBI" id="CHEBI:30616"/>
    </ligand>
</feature>
<feature type="binding site" evidence="1">
    <location>
        <position position="173"/>
    </location>
    <ligand>
        <name>ATP</name>
        <dbReference type="ChEBI" id="CHEBI:30616"/>
    </ligand>
</feature>
<feature type="binding site" evidence="1">
    <location>
        <position position="183"/>
    </location>
    <ligand>
        <name>ATP</name>
        <dbReference type="ChEBI" id="CHEBI:30616"/>
    </ligand>
</feature>
<feature type="binding site" evidence="1">
    <location>
        <position position="220"/>
    </location>
    <ligand>
        <name>ATP</name>
        <dbReference type="ChEBI" id="CHEBI:30616"/>
    </ligand>
</feature>
<feature type="binding site" evidence="1">
    <location>
        <position position="293"/>
    </location>
    <ligand>
        <name>DNA</name>
        <dbReference type="ChEBI" id="CHEBI:16991"/>
    </ligand>
</feature>
<feature type="binding site" evidence="1">
    <location>
        <position position="312"/>
    </location>
    <ligand>
        <name>DNA</name>
        <dbReference type="ChEBI" id="CHEBI:16991"/>
    </ligand>
</feature>
<feature type="binding site" evidence="1">
    <location>
        <position position="317"/>
    </location>
    <ligand>
        <name>DNA</name>
        <dbReference type="ChEBI" id="CHEBI:16991"/>
    </ligand>
</feature>
<gene>
    <name evidence="1" type="primary">ruvB</name>
    <name type="ordered locus">Nwi_2724</name>
</gene>
<evidence type="ECO:0000255" key="1">
    <source>
        <dbReference type="HAMAP-Rule" id="MF_00016"/>
    </source>
</evidence>
<evidence type="ECO:0000256" key="2">
    <source>
        <dbReference type="SAM" id="MobiDB-lite"/>
    </source>
</evidence>
<organism>
    <name type="scientific">Nitrobacter winogradskyi (strain ATCC 25391 / DSM 10237 / CIP 104748 / NCIMB 11846 / Nb-255)</name>
    <dbReference type="NCBI Taxonomy" id="323098"/>
    <lineage>
        <taxon>Bacteria</taxon>
        <taxon>Pseudomonadati</taxon>
        <taxon>Pseudomonadota</taxon>
        <taxon>Alphaproteobacteria</taxon>
        <taxon>Hyphomicrobiales</taxon>
        <taxon>Nitrobacteraceae</taxon>
        <taxon>Nitrobacter</taxon>
    </lineage>
</organism>
<keyword id="KW-0067">ATP-binding</keyword>
<keyword id="KW-0963">Cytoplasm</keyword>
<keyword id="KW-0227">DNA damage</keyword>
<keyword id="KW-0233">DNA recombination</keyword>
<keyword id="KW-0234">DNA repair</keyword>
<keyword id="KW-0238">DNA-binding</keyword>
<keyword id="KW-0378">Hydrolase</keyword>
<keyword id="KW-0547">Nucleotide-binding</keyword>
<keyword id="KW-1185">Reference proteome</keyword>
<accession>Q3SP14</accession>
<dbReference type="EC" id="3.6.4.-" evidence="1"/>
<dbReference type="EMBL" id="CP000115">
    <property type="protein sequence ID" value="ABA05977.1"/>
    <property type="molecule type" value="Genomic_DNA"/>
</dbReference>
<dbReference type="RefSeq" id="WP_011315923.1">
    <property type="nucleotide sequence ID" value="NC_007406.1"/>
</dbReference>
<dbReference type="SMR" id="Q3SP14"/>
<dbReference type="STRING" id="323098.Nwi_2724"/>
<dbReference type="KEGG" id="nwi:Nwi_2724"/>
<dbReference type="eggNOG" id="COG2255">
    <property type="taxonomic scope" value="Bacteria"/>
</dbReference>
<dbReference type="HOGENOM" id="CLU_055599_1_0_5"/>
<dbReference type="OrthoDB" id="9804478at2"/>
<dbReference type="Proteomes" id="UP000002531">
    <property type="component" value="Chromosome"/>
</dbReference>
<dbReference type="GO" id="GO:0005737">
    <property type="term" value="C:cytoplasm"/>
    <property type="evidence" value="ECO:0007669"/>
    <property type="project" value="UniProtKB-SubCell"/>
</dbReference>
<dbReference type="GO" id="GO:0048476">
    <property type="term" value="C:Holliday junction resolvase complex"/>
    <property type="evidence" value="ECO:0007669"/>
    <property type="project" value="UniProtKB-UniRule"/>
</dbReference>
<dbReference type="GO" id="GO:0005524">
    <property type="term" value="F:ATP binding"/>
    <property type="evidence" value="ECO:0007669"/>
    <property type="project" value="UniProtKB-UniRule"/>
</dbReference>
<dbReference type="GO" id="GO:0016887">
    <property type="term" value="F:ATP hydrolysis activity"/>
    <property type="evidence" value="ECO:0007669"/>
    <property type="project" value="InterPro"/>
</dbReference>
<dbReference type="GO" id="GO:0000400">
    <property type="term" value="F:four-way junction DNA binding"/>
    <property type="evidence" value="ECO:0007669"/>
    <property type="project" value="UniProtKB-UniRule"/>
</dbReference>
<dbReference type="GO" id="GO:0009378">
    <property type="term" value="F:four-way junction helicase activity"/>
    <property type="evidence" value="ECO:0007669"/>
    <property type="project" value="InterPro"/>
</dbReference>
<dbReference type="GO" id="GO:0006310">
    <property type="term" value="P:DNA recombination"/>
    <property type="evidence" value="ECO:0007669"/>
    <property type="project" value="UniProtKB-UniRule"/>
</dbReference>
<dbReference type="GO" id="GO:0006281">
    <property type="term" value="P:DNA repair"/>
    <property type="evidence" value="ECO:0007669"/>
    <property type="project" value="UniProtKB-UniRule"/>
</dbReference>
<dbReference type="CDD" id="cd00009">
    <property type="entry name" value="AAA"/>
    <property type="match status" value="1"/>
</dbReference>
<dbReference type="FunFam" id="3.40.50.300:FF:000073">
    <property type="entry name" value="Holliday junction ATP-dependent DNA helicase RuvB"/>
    <property type="match status" value="1"/>
</dbReference>
<dbReference type="Gene3D" id="1.10.8.60">
    <property type="match status" value="1"/>
</dbReference>
<dbReference type="Gene3D" id="3.40.50.300">
    <property type="entry name" value="P-loop containing nucleotide triphosphate hydrolases"/>
    <property type="match status" value="1"/>
</dbReference>
<dbReference type="Gene3D" id="1.10.10.10">
    <property type="entry name" value="Winged helix-like DNA-binding domain superfamily/Winged helix DNA-binding domain"/>
    <property type="match status" value="1"/>
</dbReference>
<dbReference type="HAMAP" id="MF_00016">
    <property type="entry name" value="DNA_HJ_migration_RuvB"/>
    <property type="match status" value="1"/>
</dbReference>
<dbReference type="InterPro" id="IPR003593">
    <property type="entry name" value="AAA+_ATPase"/>
</dbReference>
<dbReference type="InterPro" id="IPR041445">
    <property type="entry name" value="AAA_lid_4"/>
</dbReference>
<dbReference type="InterPro" id="IPR004605">
    <property type="entry name" value="DNA_helicase_Holl-junc_RuvB"/>
</dbReference>
<dbReference type="InterPro" id="IPR027417">
    <property type="entry name" value="P-loop_NTPase"/>
</dbReference>
<dbReference type="InterPro" id="IPR008824">
    <property type="entry name" value="RuvB-like_N"/>
</dbReference>
<dbReference type="InterPro" id="IPR008823">
    <property type="entry name" value="RuvB_C"/>
</dbReference>
<dbReference type="InterPro" id="IPR036388">
    <property type="entry name" value="WH-like_DNA-bd_sf"/>
</dbReference>
<dbReference type="InterPro" id="IPR036390">
    <property type="entry name" value="WH_DNA-bd_sf"/>
</dbReference>
<dbReference type="NCBIfam" id="NF000868">
    <property type="entry name" value="PRK00080.1"/>
    <property type="match status" value="1"/>
</dbReference>
<dbReference type="NCBIfam" id="TIGR00635">
    <property type="entry name" value="ruvB"/>
    <property type="match status" value="1"/>
</dbReference>
<dbReference type="PANTHER" id="PTHR42848">
    <property type="match status" value="1"/>
</dbReference>
<dbReference type="PANTHER" id="PTHR42848:SF1">
    <property type="entry name" value="HOLLIDAY JUNCTION BRANCH MIGRATION COMPLEX SUBUNIT RUVB"/>
    <property type="match status" value="1"/>
</dbReference>
<dbReference type="Pfam" id="PF17864">
    <property type="entry name" value="AAA_lid_4"/>
    <property type="match status" value="1"/>
</dbReference>
<dbReference type="Pfam" id="PF05491">
    <property type="entry name" value="RuvB_C"/>
    <property type="match status" value="1"/>
</dbReference>
<dbReference type="Pfam" id="PF05496">
    <property type="entry name" value="RuvB_N"/>
    <property type="match status" value="1"/>
</dbReference>
<dbReference type="SMART" id="SM00382">
    <property type="entry name" value="AAA"/>
    <property type="match status" value="1"/>
</dbReference>
<dbReference type="SUPFAM" id="SSF52540">
    <property type="entry name" value="P-loop containing nucleoside triphosphate hydrolases"/>
    <property type="match status" value="1"/>
</dbReference>
<dbReference type="SUPFAM" id="SSF46785">
    <property type="entry name" value="Winged helix' DNA-binding domain"/>
    <property type="match status" value="1"/>
</dbReference>
<sequence length="348" mass="37800">MTEASRIVAPERHADDVGDTALRPQKLSEFIGQRQARANLQIFIDAARKREEALDHVLFVGPPGLGKTTLAQIVARELGVGFRATSGPVIAKAGDLAALLTNLEERDVLFIDEIHRLSPAVEEVLYPAMEDFQLDLIIGEGPAARSVKIELAKFTLVGATTRAGLLTNPLRDRFGIPVRLNFYTEDELEKIVSRGARVLNVGMTPDGANEIARRARGTPRIAGRLLRRVRDFAEAADAAAIDRAVADHALGALEVDAAGLDAMDRRYLTTIALSYGGGPVGVETMAAALSEPRDAIEDIIEPYLIQCGYLQRTPRGRLLTSHAFRHLGLTEPSRDPAQSGLFGQDEDR</sequence>
<comment type="function">
    <text evidence="1">The RuvA-RuvB-RuvC complex processes Holliday junction (HJ) DNA during genetic recombination and DNA repair, while the RuvA-RuvB complex plays an important role in the rescue of blocked DNA replication forks via replication fork reversal (RFR). RuvA specifically binds to HJ cruciform DNA, conferring on it an open structure. The RuvB hexamer acts as an ATP-dependent pump, pulling dsDNA into and through the RuvAB complex. RuvB forms 2 homohexamers on either side of HJ DNA bound by 1 or 2 RuvA tetramers; 4 subunits per hexamer contact DNA at a time. Coordinated motions by a converter formed by DNA-disengaged RuvB subunits stimulates ATP hydrolysis and nucleotide exchange. Immobilization of the converter enables RuvB to convert the ATP-contained energy into a lever motion, pulling 2 nucleotides of DNA out of the RuvA tetramer per ATP hydrolyzed, thus driving DNA branch migration. The RuvB motors rotate together with the DNA substrate, which together with the progressing nucleotide cycle form the mechanistic basis for DNA recombination by continuous HJ branch migration. Branch migration allows RuvC to scan DNA until it finds its consensus sequence, where it cleaves and resolves cruciform DNA.</text>
</comment>
<comment type="catalytic activity">
    <reaction evidence="1">
        <text>ATP + H2O = ADP + phosphate + H(+)</text>
        <dbReference type="Rhea" id="RHEA:13065"/>
        <dbReference type="ChEBI" id="CHEBI:15377"/>
        <dbReference type="ChEBI" id="CHEBI:15378"/>
        <dbReference type="ChEBI" id="CHEBI:30616"/>
        <dbReference type="ChEBI" id="CHEBI:43474"/>
        <dbReference type="ChEBI" id="CHEBI:456216"/>
    </reaction>
</comment>
<comment type="subunit">
    <text evidence="1">Homohexamer. Forms an RuvA(8)-RuvB(12)-Holliday junction (HJ) complex. HJ DNA is sandwiched between 2 RuvA tetramers; dsDNA enters through RuvA and exits via RuvB. An RuvB hexamer assembles on each DNA strand where it exits the tetramer. Each RuvB hexamer is contacted by two RuvA subunits (via domain III) on 2 adjacent RuvB subunits; this complex drives branch migration. In the full resolvosome a probable DNA-RuvA(4)-RuvB(12)-RuvC(2) complex forms which resolves the HJ.</text>
</comment>
<comment type="subcellular location">
    <subcellularLocation>
        <location evidence="1">Cytoplasm</location>
    </subcellularLocation>
</comment>
<comment type="domain">
    <text evidence="1">Has 3 domains, the large (RuvB-L) and small ATPase (RuvB-S) domains and the C-terminal head (RuvB-H) domain. The head domain binds DNA, while the ATPase domains jointly bind ATP, ADP or are empty depending on the state of the subunit in the translocation cycle. During a single DNA translocation step the structure of each domain remains the same, but their relative positions change.</text>
</comment>
<comment type="similarity">
    <text evidence="1">Belongs to the RuvB family.</text>
</comment>
<proteinExistence type="inferred from homology"/>
<name>RUVB_NITWN</name>
<protein>
    <recommendedName>
        <fullName evidence="1">Holliday junction branch migration complex subunit RuvB</fullName>
        <ecNumber evidence="1">3.6.4.-</ecNumber>
    </recommendedName>
</protein>
<reference key="1">
    <citation type="journal article" date="2006" name="Appl. Environ. Microbiol.">
        <title>Genome sequence of the chemolithoautotrophic nitrite-oxidizing bacterium Nitrobacter winogradskyi Nb-255.</title>
        <authorList>
            <person name="Starkenburg S.R."/>
            <person name="Chain P.S.G."/>
            <person name="Sayavedra-Soto L.A."/>
            <person name="Hauser L."/>
            <person name="Land M.L."/>
            <person name="Larimer F.W."/>
            <person name="Malfatti S.A."/>
            <person name="Klotz M.G."/>
            <person name="Bottomley P.J."/>
            <person name="Arp D.J."/>
            <person name="Hickey W.J."/>
        </authorList>
    </citation>
    <scope>NUCLEOTIDE SEQUENCE [LARGE SCALE GENOMIC DNA]</scope>
    <source>
        <strain>ATCC 25391 / DSM 10237 / CIP 104748 / NCIMB 11846 / Nb-255</strain>
    </source>
</reference>